<sequence length="271" mass="30298">MVISVVLLLLAACAVPAQGLGSFVHCEPCDEKALSMCPPSPLGCELVKEPGCGCCMTCALAEGQSCGVYTERCAQGLRCLPRQDEEKPLHALLHGRGVCLNEKSYGEQTKIERDSREHEEPTTSEMAEETYSPKVFRPKHTRISELKAEAVKKDRRKKLTQSKFVGGAENTAHPRVIPAPEMRQESDQGPCRRHMEASLQEFKASPRMVPRAVYLPNCDRKGFYKRKQCKPSRGRKRGICWCVDKYGMKLPGMEYVDGDFQCHAFDSSNVE</sequence>
<evidence type="ECO:0000250" key="1">
    <source>
        <dbReference type="UniProtKB" id="P24593"/>
    </source>
</evidence>
<evidence type="ECO:0000250" key="2">
    <source>
        <dbReference type="UniProtKB" id="Q07079"/>
    </source>
</evidence>
<evidence type="ECO:0000255" key="3"/>
<evidence type="ECO:0000255" key="4">
    <source>
        <dbReference type="PROSITE-ProRule" id="PRU00500"/>
    </source>
</evidence>
<evidence type="ECO:0000255" key="5">
    <source>
        <dbReference type="PROSITE-ProRule" id="PRU00653"/>
    </source>
</evidence>
<evidence type="ECO:0000256" key="6">
    <source>
        <dbReference type="SAM" id="MobiDB-lite"/>
    </source>
</evidence>
<evidence type="ECO:0000269" key="7">
    <source>
    </source>
</evidence>
<proteinExistence type="evidence at protein level"/>
<feature type="signal peptide" evidence="3">
    <location>
        <begin position="1"/>
        <end position="19"/>
    </location>
</feature>
<feature type="chain" id="PRO_0000014388" description="Insulin-like growth factor-binding protein 5">
    <location>
        <begin position="20"/>
        <end position="271"/>
    </location>
</feature>
<feature type="domain" description="IGFBP N-terminal" evidence="5">
    <location>
        <begin position="22"/>
        <end position="102"/>
    </location>
</feature>
<feature type="domain" description="Thyroglobulin type-1" evidence="4">
    <location>
        <begin position="188"/>
        <end position="262"/>
    </location>
</feature>
<feature type="region of interest" description="Disordered" evidence="6">
    <location>
        <begin position="109"/>
        <end position="129"/>
    </location>
</feature>
<feature type="compositionally biased region" description="Basic and acidic residues" evidence="6">
    <location>
        <begin position="109"/>
        <end position="121"/>
    </location>
</feature>
<feature type="modified residue" description="Phosphoserine" evidence="1">
    <location>
        <position position="115"/>
    </location>
</feature>
<feature type="disulfide bond" evidence="5">
    <location>
        <begin position="26"/>
        <end position="52"/>
    </location>
</feature>
<feature type="disulfide bond" evidence="5">
    <location>
        <begin position="29"/>
        <end position="54"/>
    </location>
</feature>
<feature type="disulfide bond" evidence="5">
    <location>
        <begin position="37"/>
        <end position="55"/>
    </location>
</feature>
<feature type="disulfide bond" evidence="5">
    <location>
        <begin position="44"/>
        <end position="58"/>
    </location>
</feature>
<feature type="disulfide bond" evidence="5">
    <location>
        <begin position="66"/>
        <end position="79"/>
    </location>
</feature>
<feature type="disulfide bond" evidence="5">
    <location>
        <begin position="73"/>
        <end position="99"/>
    </location>
</feature>
<feature type="disulfide bond" evidence="4">
    <location>
        <begin position="191"/>
        <end position="218"/>
    </location>
</feature>
<feature type="disulfide bond" evidence="4">
    <location>
        <begin position="229"/>
        <end position="240"/>
    </location>
</feature>
<feature type="disulfide bond" evidence="4">
    <location>
        <begin position="242"/>
        <end position="262"/>
    </location>
</feature>
<name>IBP5_RAT</name>
<comment type="function">
    <text evidence="1 2 7">Multifunctional protein that plays a critical role in regulating the availability of IGFs to their receptors and thereby regulates IGF-mediated cellular processes including proliferation, differentiation, and apoptosis in a cell-type specific manner (PubMed:23417767). Increases the cell proliferation of osteoblasts, intestinal smooth muscle cells and neuroblastoma cells (By similarity). Enhances adhesion and survival of epithelial cells but decreases adhesion of mesenchymal cells (By similarity). Once secreted, acts as a major mediator of mTORC1-dependent feedback inhibition of IGF1 signaling (By similarity). Also plays a role in the induction of extracellular matrix (ECM) production and deposition independently of its nuclear translocation and binding to IGFs. Acts itself as a growth factor that can act independently of IGFs to regulate bone formation. Acts as a ligand for the ROR1 receptor which triggers formation of ROR1/HER2 heterodimer to enhance CREB oncogenic signaling (By similarity).</text>
</comment>
<comment type="subunit">
    <text evidence="1">Interacts with IGF1; this interaction enhances the growth stimulatory effects of IGF1 on fibroblasts. Interacts with CAV1; this interaction allows trafficking of IGFBP5 from the plasma membrane to the nucleus. Interacts with NCL; this interaction is necessary for IGFBP5 localization to the nucleus.</text>
</comment>
<comment type="subcellular location">
    <subcellularLocation>
        <location evidence="1">Secreted</location>
    </subcellularLocation>
    <subcellularLocation>
        <location evidence="1">Cytoplasm</location>
    </subcellularLocation>
    <subcellularLocation>
        <location evidence="1">Nucleus</location>
    </subcellularLocation>
</comment>
<comment type="tissue specificity">
    <text>Mostly in kidney.</text>
</comment>
<comment type="induction">
    <text evidence="7">By high glucose concentrations both at mRNA and protein levels.</text>
</comment>
<accession>P24594</accession>
<protein>
    <recommendedName>
        <fullName>Insulin-like growth factor-binding protein 5</fullName>
        <shortName>IBP-5</shortName>
        <shortName>IGF-binding protein 5</shortName>
        <shortName>IGFBP-5</shortName>
    </recommendedName>
</protein>
<keyword id="KW-0963">Cytoplasm</keyword>
<keyword id="KW-0903">Direct protein sequencing</keyword>
<keyword id="KW-1015">Disulfide bond</keyword>
<keyword id="KW-0340">Growth factor binding</keyword>
<keyword id="KW-0539">Nucleus</keyword>
<keyword id="KW-0597">Phosphoprotein</keyword>
<keyword id="KW-1185">Reference proteome</keyword>
<keyword id="KW-0964">Secreted</keyword>
<keyword id="KW-0732">Signal</keyword>
<gene>
    <name type="primary">Igfbp5</name>
    <name type="synonym">Igfbp-5</name>
</gene>
<dbReference type="EMBL" id="M62781">
    <property type="protein sequence ID" value="AAA53533.1"/>
    <property type="molecule type" value="mRNA"/>
</dbReference>
<dbReference type="EMBL" id="L08275">
    <property type="status" value="NOT_ANNOTATED_CDS"/>
    <property type="molecule type" value="Genomic_DNA"/>
</dbReference>
<dbReference type="PIR" id="JC1463">
    <property type="entry name" value="JC1463"/>
</dbReference>
<dbReference type="RefSeq" id="NP_036949.1">
    <property type="nucleotide sequence ID" value="NM_012817.2"/>
</dbReference>
<dbReference type="SMR" id="P24594"/>
<dbReference type="FunCoup" id="P24594">
    <property type="interactions" value="200"/>
</dbReference>
<dbReference type="MINT" id="P24594"/>
<dbReference type="STRING" id="10116.ENSRNOP00000023530"/>
<dbReference type="MEROPS" id="I31.952"/>
<dbReference type="iPTMnet" id="P24594"/>
<dbReference type="PhosphoSitePlus" id="P24594"/>
<dbReference type="PaxDb" id="10116-ENSRNOP00000023530"/>
<dbReference type="Ensembl" id="ENSRNOT00000023530.7">
    <property type="protein sequence ID" value="ENSRNOP00000023530.3"/>
    <property type="gene ID" value="ENSRNOG00000017206.7"/>
</dbReference>
<dbReference type="GeneID" id="25285"/>
<dbReference type="KEGG" id="rno:25285"/>
<dbReference type="UCSC" id="RGD:2876">
    <property type="organism name" value="rat"/>
</dbReference>
<dbReference type="AGR" id="RGD:2876"/>
<dbReference type="CTD" id="3488"/>
<dbReference type="RGD" id="2876">
    <property type="gene designation" value="Igfbp5"/>
</dbReference>
<dbReference type="eggNOG" id="ENOG502QUPK">
    <property type="taxonomic scope" value="Eukaryota"/>
</dbReference>
<dbReference type="GeneTree" id="ENSGT00940000155890"/>
<dbReference type="InParanoid" id="P24594"/>
<dbReference type="OMA" id="YTERCAL"/>
<dbReference type="OrthoDB" id="6068400at2759"/>
<dbReference type="PhylomeDB" id="P24594"/>
<dbReference type="TreeFam" id="TF331211"/>
<dbReference type="Reactome" id="R-RNO-381426">
    <property type="pathway name" value="Regulation of Insulin-like Growth Factor (IGF) transport and uptake by Insulin-like Growth Factor Binding Proteins (IGFBPs)"/>
</dbReference>
<dbReference type="Reactome" id="R-RNO-8957275">
    <property type="pathway name" value="Post-translational protein phosphorylation"/>
</dbReference>
<dbReference type="PRO" id="PR:P24594"/>
<dbReference type="Proteomes" id="UP000002494">
    <property type="component" value="Chromosome 9"/>
</dbReference>
<dbReference type="Bgee" id="ENSRNOG00000017206">
    <property type="expression patterns" value="Expressed in esophagus and 19 other cell types or tissues"/>
</dbReference>
<dbReference type="ExpressionAtlas" id="P24594">
    <property type="expression patterns" value="baseline and differential"/>
</dbReference>
<dbReference type="GO" id="GO:0005737">
    <property type="term" value="C:cytoplasm"/>
    <property type="evidence" value="ECO:0007669"/>
    <property type="project" value="UniProtKB-SubCell"/>
</dbReference>
<dbReference type="GO" id="GO:0005615">
    <property type="term" value="C:extracellular space"/>
    <property type="evidence" value="ECO:0000318"/>
    <property type="project" value="GO_Central"/>
</dbReference>
<dbReference type="GO" id="GO:0042567">
    <property type="term" value="C:insulin-like growth factor ternary complex"/>
    <property type="evidence" value="ECO:0000266"/>
    <property type="project" value="RGD"/>
</dbReference>
<dbReference type="GO" id="GO:0005634">
    <property type="term" value="C:nucleus"/>
    <property type="evidence" value="ECO:0007669"/>
    <property type="project" value="UniProtKB-SubCell"/>
</dbReference>
<dbReference type="GO" id="GO:0001968">
    <property type="term" value="F:fibronectin binding"/>
    <property type="evidence" value="ECO:0000266"/>
    <property type="project" value="RGD"/>
</dbReference>
<dbReference type="GO" id="GO:0005520">
    <property type="term" value="F:insulin-like growth factor binding"/>
    <property type="evidence" value="ECO:0000314"/>
    <property type="project" value="RGD"/>
</dbReference>
<dbReference type="GO" id="GO:0031994">
    <property type="term" value="F:insulin-like growth factor I binding"/>
    <property type="evidence" value="ECO:0000266"/>
    <property type="project" value="RGD"/>
</dbReference>
<dbReference type="GO" id="GO:0031995">
    <property type="term" value="F:insulin-like growth factor II binding"/>
    <property type="evidence" value="ECO:0000318"/>
    <property type="project" value="GO_Central"/>
</dbReference>
<dbReference type="GO" id="GO:0048018">
    <property type="term" value="F:receptor ligand activity"/>
    <property type="evidence" value="ECO:0000266"/>
    <property type="project" value="RGD"/>
</dbReference>
<dbReference type="GO" id="GO:0008283">
    <property type="term" value="P:cell population proliferation"/>
    <property type="evidence" value="ECO:0000266"/>
    <property type="project" value="RGD"/>
</dbReference>
<dbReference type="GO" id="GO:0071320">
    <property type="term" value="P:cellular response to cAMP"/>
    <property type="evidence" value="ECO:0000266"/>
    <property type="project" value="RGD"/>
</dbReference>
<dbReference type="GO" id="GO:0007565">
    <property type="term" value="P:female pregnancy"/>
    <property type="evidence" value="ECO:0000266"/>
    <property type="project" value="RGD"/>
</dbReference>
<dbReference type="GO" id="GO:0042593">
    <property type="term" value="P:glucose homeostasis"/>
    <property type="evidence" value="ECO:0000266"/>
    <property type="project" value="RGD"/>
</dbReference>
<dbReference type="GO" id="GO:0031069">
    <property type="term" value="P:hair follicle morphogenesis"/>
    <property type="evidence" value="ECO:0000266"/>
    <property type="project" value="RGD"/>
</dbReference>
<dbReference type="GO" id="GO:0048009">
    <property type="term" value="P:insulin-like growth factor receptor signaling pathway"/>
    <property type="evidence" value="ECO:0000266"/>
    <property type="project" value="RGD"/>
</dbReference>
<dbReference type="GO" id="GO:0035556">
    <property type="term" value="P:intracellular signal transduction"/>
    <property type="evidence" value="ECO:0000270"/>
    <property type="project" value="RGD"/>
</dbReference>
<dbReference type="GO" id="GO:0048286">
    <property type="term" value="P:lung alveolus development"/>
    <property type="evidence" value="ECO:0000266"/>
    <property type="project" value="RGD"/>
</dbReference>
<dbReference type="GO" id="GO:0060056">
    <property type="term" value="P:mammary gland involution"/>
    <property type="evidence" value="ECO:0000266"/>
    <property type="project" value="RGD"/>
</dbReference>
<dbReference type="GO" id="GO:0030336">
    <property type="term" value="P:negative regulation of cell migration"/>
    <property type="evidence" value="ECO:0000266"/>
    <property type="project" value="RGD"/>
</dbReference>
<dbReference type="GO" id="GO:0045926">
    <property type="term" value="P:negative regulation of growth"/>
    <property type="evidence" value="ECO:0000266"/>
    <property type="project" value="RGD"/>
</dbReference>
<dbReference type="GO" id="GO:0043569">
    <property type="term" value="P:negative regulation of insulin-like growth factor receptor signaling pathway"/>
    <property type="evidence" value="ECO:0000266"/>
    <property type="project" value="RGD"/>
</dbReference>
<dbReference type="GO" id="GO:1901862">
    <property type="term" value="P:negative regulation of muscle tissue development"/>
    <property type="evidence" value="ECO:0000266"/>
    <property type="project" value="RGD"/>
</dbReference>
<dbReference type="GO" id="GO:0045668">
    <property type="term" value="P:negative regulation of osteoblast differentiation"/>
    <property type="evidence" value="ECO:0000266"/>
    <property type="project" value="RGD"/>
</dbReference>
<dbReference type="GO" id="GO:1904205">
    <property type="term" value="P:negative regulation of skeletal muscle hypertrophy"/>
    <property type="evidence" value="ECO:0000266"/>
    <property type="project" value="RGD"/>
</dbReference>
<dbReference type="GO" id="GO:0014912">
    <property type="term" value="P:negative regulation of smooth muscle cell migration"/>
    <property type="evidence" value="ECO:0000266"/>
    <property type="project" value="RGD"/>
</dbReference>
<dbReference type="GO" id="GO:0048662">
    <property type="term" value="P:negative regulation of smooth muscle cell proliferation"/>
    <property type="evidence" value="ECO:0000266"/>
    <property type="project" value="RGD"/>
</dbReference>
<dbReference type="GO" id="GO:0017148">
    <property type="term" value="P:negative regulation of translation"/>
    <property type="evidence" value="ECO:0000266"/>
    <property type="project" value="RGD"/>
</dbReference>
<dbReference type="GO" id="GO:0001649">
    <property type="term" value="P:osteoblast differentiation"/>
    <property type="evidence" value="ECO:0000266"/>
    <property type="project" value="RGD"/>
</dbReference>
<dbReference type="GO" id="GO:0043568">
    <property type="term" value="P:positive regulation of insulin-like growth factor receptor signaling pathway"/>
    <property type="evidence" value="ECO:0000266"/>
    <property type="project" value="RGD"/>
</dbReference>
<dbReference type="GO" id="GO:0051897">
    <property type="term" value="P:positive regulation of phosphatidylinositol 3-kinase/protein kinase B signal transduction"/>
    <property type="evidence" value="ECO:0000266"/>
    <property type="project" value="RGD"/>
</dbReference>
<dbReference type="GO" id="GO:1904754">
    <property type="term" value="P:positive regulation of vascular associated smooth muscle cell migration"/>
    <property type="evidence" value="ECO:0000266"/>
    <property type="project" value="RGD"/>
</dbReference>
<dbReference type="GO" id="GO:1904707">
    <property type="term" value="P:positive regulation of vascular associated smooth muscle cell proliferation"/>
    <property type="evidence" value="ECO:0000266"/>
    <property type="project" value="RGD"/>
</dbReference>
<dbReference type="GO" id="GO:0001558">
    <property type="term" value="P:regulation of cell growth"/>
    <property type="evidence" value="ECO:0000266"/>
    <property type="project" value="RGD"/>
</dbReference>
<dbReference type="GO" id="GO:0040008">
    <property type="term" value="P:regulation of growth"/>
    <property type="evidence" value="ECO:0000266"/>
    <property type="project" value="RGD"/>
</dbReference>
<dbReference type="GO" id="GO:0043567">
    <property type="term" value="P:regulation of insulin-like growth factor receptor signaling pathway"/>
    <property type="evidence" value="ECO:0000318"/>
    <property type="project" value="GO_Central"/>
</dbReference>
<dbReference type="GO" id="GO:0060416">
    <property type="term" value="P:response to growth hormone"/>
    <property type="evidence" value="ECO:0000250"/>
    <property type="project" value="AgBase"/>
</dbReference>
<dbReference type="GO" id="GO:0051146">
    <property type="term" value="P:striated muscle cell differentiation"/>
    <property type="evidence" value="ECO:0000266"/>
    <property type="project" value="RGD"/>
</dbReference>
<dbReference type="GO" id="GO:0044342">
    <property type="term" value="P:type B pancreatic cell proliferation"/>
    <property type="evidence" value="ECO:0000266"/>
    <property type="project" value="RGD"/>
</dbReference>
<dbReference type="CDD" id="cd00191">
    <property type="entry name" value="TY"/>
    <property type="match status" value="1"/>
</dbReference>
<dbReference type="FunFam" id="4.10.40.20:FF:000001">
    <property type="entry name" value="Insulin-like growth factor binding protein 5"/>
    <property type="match status" value="1"/>
</dbReference>
<dbReference type="FunFam" id="4.10.800.10:FF:000005">
    <property type="entry name" value="Putative insulin-like growth factor-binding protein 5"/>
    <property type="match status" value="1"/>
</dbReference>
<dbReference type="Gene3D" id="4.10.40.20">
    <property type="match status" value="1"/>
</dbReference>
<dbReference type="Gene3D" id="4.10.800.10">
    <property type="entry name" value="Thyroglobulin type-1"/>
    <property type="match status" value="1"/>
</dbReference>
<dbReference type="InterPro" id="IPR009030">
    <property type="entry name" value="Growth_fac_rcpt_cys_sf"/>
</dbReference>
<dbReference type="InterPro" id="IPR012213">
    <property type="entry name" value="IGFBP-5"/>
</dbReference>
<dbReference type="InterPro" id="IPR000867">
    <property type="entry name" value="IGFBP-like"/>
</dbReference>
<dbReference type="InterPro" id="IPR022321">
    <property type="entry name" value="IGFBP_1-6_chordata"/>
</dbReference>
<dbReference type="InterPro" id="IPR017891">
    <property type="entry name" value="Insulin_GF-bd_Cys-rich_CS"/>
</dbReference>
<dbReference type="InterPro" id="IPR000716">
    <property type="entry name" value="Thyroglobulin_1"/>
</dbReference>
<dbReference type="InterPro" id="IPR036857">
    <property type="entry name" value="Thyroglobulin_1_sf"/>
</dbReference>
<dbReference type="PANTHER" id="PTHR11551">
    <property type="entry name" value="INSULIN-LIKE GROWTH FACTOR BINDING PROTEIN"/>
    <property type="match status" value="1"/>
</dbReference>
<dbReference type="PANTHER" id="PTHR11551:SF4">
    <property type="entry name" value="INSULIN-LIKE GROWTH FACTOR-BINDING PROTEIN 5"/>
    <property type="match status" value="1"/>
</dbReference>
<dbReference type="Pfam" id="PF00219">
    <property type="entry name" value="IGFBP"/>
    <property type="match status" value="1"/>
</dbReference>
<dbReference type="Pfam" id="PF00086">
    <property type="entry name" value="Thyroglobulin_1"/>
    <property type="match status" value="1"/>
</dbReference>
<dbReference type="PRINTS" id="PR01976">
    <property type="entry name" value="IGFBPFAMILY"/>
</dbReference>
<dbReference type="PRINTS" id="PR01981">
    <property type="entry name" value="IGFBPFAMILY5"/>
</dbReference>
<dbReference type="SMART" id="SM00121">
    <property type="entry name" value="IB"/>
    <property type="match status" value="1"/>
</dbReference>
<dbReference type="SMART" id="SM00211">
    <property type="entry name" value="TY"/>
    <property type="match status" value="1"/>
</dbReference>
<dbReference type="SUPFAM" id="SSF57184">
    <property type="entry name" value="Growth factor receptor domain"/>
    <property type="match status" value="1"/>
</dbReference>
<dbReference type="SUPFAM" id="SSF57610">
    <property type="entry name" value="Thyroglobulin type-1 domain"/>
    <property type="match status" value="1"/>
</dbReference>
<dbReference type="PROSITE" id="PS00222">
    <property type="entry name" value="IGFBP_N_1"/>
    <property type="match status" value="1"/>
</dbReference>
<dbReference type="PROSITE" id="PS51323">
    <property type="entry name" value="IGFBP_N_2"/>
    <property type="match status" value="1"/>
</dbReference>
<dbReference type="PROSITE" id="PS00484">
    <property type="entry name" value="THYROGLOBULIN_1_1"/>
    <property type="match status" value="1"/>
</dbReference>
<dbReference type="PROSITE" id="PS51162">
    <property type="entry name" value="THYROGLOBULIN_1_2"/>
    <property type="match status" value="1"/>
</dbReference>
<organism>
    <name type="scientific">Rattus norvegicus</name>
    <name type="common">Rat</name>
    <dbReference type="NCBI Taxonomy" id="10116"/>
    <lineage>
        <taxon>Eukaryota</taxon>
        <taxon>Metazoa</taxon>
        <taxon>Chordata</taxon>
        <taxon>Craniata</taxon>
        <taxon>Vertebrata</taxon>
        <taxon>Euteleostomi</taxon>
        <taxon>Mammalia</taxon>
        <taxon>Eutheria</taxon>
        <taxon>Euarchontoglires</taxon>
        <taxon>Glires</taxon>
        <taxon>Rodentia</taxon>
        <taxon>Myomorpha</taxon>
        <taxon>Muroidea</taxon>
        <taxon>Muridae</taxon>
        <taxon>Murinae</taxon>
        <taxon>Rattus</taxon>
    </lineage>
</organism>
<reference key="1">
    <citation type="journal article" date="1991" name="J. Biol. Chem.">
        <title>Identification of five different insulin-like growth factor binding proteins (IGFBPs) from adult rat serum and molecular cloning of a novel IGFBP-5 in rat and human.</title>
        <authorList>
            <person name="Shimasaki S."/>
            <person name="Shimonaka M."/>
            <person name="Zhang H.-P."/>
            <person name="Ling N."/>
        </authorList>
    </citation>
    <scope>NUCLEOTIDE SEQUENCE [MRNA]</scope>
    <scope>PROTEIN SEQUENCE OF 20-53</scope>
    <source>
        <tissue>Ovary</tissue>
    </source>
</reference>
<reference key="2">
    <citation type="journal article" date="1993" name="Biochem. Biophys. Res. Commun.">
        <title>Cloning of the rat insulin-like growth factor binding protein-5 gene and DNA sequence analysis of its promoter region.</title>
        <authorList>
            <person name="Zhu X."/>
            <person name="Ling N."/>
            <person name="Shimasaki S."/>
        </authorList>
    </citation>
    <scope>NUCLEOTIDE SEQUENCE [GENOMIC DNA]</scope>
    <source>
        <strain>Sprague-Dawley</strain>
    </source>
</reference>
<reference key="3">
    <citation type="journal article" date="2013" name="J. Mol. Endocrinol.">
        <title>IGFBP5 mediates high glucose-induced cardiac fibroblast activation.</title>
        <authorList>
            <person name="Song S.E."/>
            <person name="Kim Y.W."/>
            <person name="Kim J.Y."/>
            <person name="Lee D.H."/>
            <person name="Kim J.R."/>
            <person name="Park S.Y."/>
        </authorList>
    </citation>
    <scope>FUNCTION</scope>
    <scope>INDUCTION BY HIGH GLUCOSE</scope>
</reference>